<organismHost>
    <name type="scientific">Lepidoptera</name>
    <name type="common">butterflies and moths</name>
    <dbReference type="NCBI Taxonomy" id="7088"/>
</organismHost>
<sequence>MNVNLYCPNGEHDNNISFIMPSKTNAVIVYLFKLDIEHPPTYNVNAKTRLVSGYENSRPININLRSITPSLNGTRGAYVISCIRAPRLYRDLFAYNKYTAPLGFVVTRTHAELQVWHILSVRKTFEAKSTRSVTGMLAHTDNGPDKFYAKDLMIMSGNVSVHFINNLQKCRAHHKDIDIFKHLCPELQIDNSVVQLETRSS</sequence>
<dbReference type="EMBL" id="L22858">
    <property type="protein sequence ID" value="AAA66776.1"/>
    <property type="molecule type" value="Genomic_DNA"/>
</dbReference>
<dbReference type="EMBL" id="U04051">
    <property type="protein sequence ID" value="AAA03637.1"/>
    <property type="molecule type" value="Unassigned_DNA"/>
</dbReference>
<dbReference type="PIR" id="D72868">
    <property type="entry name" value="D72868"/>
</dbReference>
<dbReference type="RefSeq" id="NP_054177.1">
    <property type="nucleotide sequence ID" value="NC_001623.1"/>
</dbReference>
<dbReference type="GeneID" id="1403979"/>
<dbReference type="KEGG" id="vg:1403979"/>
<dbReference type="OrthoDB" id="10040at10239"/>
<dbReference type="Proteomes" id="UP000008292">
    <property type="component" value="Segment"/>
</dbReference>
<dbReference type="InterPro" id="IPR009235">
    <property type="entry name" value="AcMNPV_Orf146"/>
</dbReference>
<dbReference type="Pfam" id="PF05959">
    <property type="entry name" value="DUF884"/>
    <property type="match status" value="1"/>
</dbReference>
<accession>P41704</accession>
<feature type="chain" id="PRO_0000133071" description="Uncharacterized 22.9 kDa protein in IE0-IE1 intergenic region">
    <location>
        <begin position="1"/>
        <end position="201"/>
    </location>
</feature>
<keyword id="KW-1185">Reference proteome</keyword>
<proteinExistence type="predicted"/>
<protein>
    <recommendedName>
        <fullName>Uncharacterized 22.9 kDa protein in IE0-IE1 intergenic region</fullName>
    </recommendedName>
</protein>
<name>Y146_NPVAC</name>
<reference key="1">
    <citation type="journal article" date="1994" name="Virology">
        <title>The complete DNA sequence of Autographa californica nuclear polyhedrosis virus.</title>
        <authorList>
            <person name="Ayres M.D."/>
            <person name="Howard S.C."/>
            <person name="Kuzio J."/>
            <person name="Lopez-Ferber M."/>
            <person name="Possee R.D."/>
        </authorList>
    </citation>
    <scope>NUCLEOTIDE SEQUENCE [LARGE SCALE GENOMIC DNA]</scope>
    <source>
        <strain>C6</strain>
    </source>
</reference>
<reference key="2">
    <citation type="submission" date="1993-12" db="EMBL/GenBank/DDBJ databases">
        <title>Analysis of the Autographa californica nuclear polyhedrosis virus IE0 intron region and identification of a structural protein specific for AcMNPV PDV.</title>
        <authorList>
            <person name="Ramamurthy P."/>
            <person name="Braunagel S.C."/>
            <person name="Summers M.D."/>
        </authorList>
    </citation>
    <scope>NUCLEOTIDE SEQUENCE</scope>
    <source>
        <strain>E2</strain>
    </source>
</reference>
<organism>
    <name type="scientific">Autographa californica nuclear polyhedrosis virus</name>
    <name type="common">AcMNPV</name>
    <dbReference type="NCBI Taxonomy" id="46015"/>
    <lineage>
        <taxon>Viruses</taxon>
        <taxon>Viruses incertae sedis</taxon>
        <taxon>Naldaviricetes</taxon>
        <taxon>Lefavirales</taxon>
        <taxon>Baculoviridae</taxon>
        <taxon>Alphabaculovirus</taxon>
        <taxon>Alphabaculovirus aucalifornicae</taxon>
    </lineage>
</organism>